<comment type="similarity">
    <text evidence="1">Belongs to the DsrB family.</text>
</comment>
<evidence type="ECO:0000255" key="1">
    <source>
        <dbReference type="HAMAP-Rule" id="MF_01549"/>
    </source>
</evidence>
<gene>
    <name evidence="1" type="primary">dsrB</name>
    <name type="ordered locus">E2348C_2066</name>
</gene>
<protein>
    <recommendedName>
        <fullName evidence="1">Protein DsrB</fullName>
    </recommendedName>
</protein>
<dbReference type="EMBL" id="FM180568">
    <property type="protein sequence ID" value="CAS09614.1"/>
    <property type="molecule type" value="Genomic_DNA"/>
</dbReference>
<dbReference type="RefSeq" id="WP_000867217.1">
    <property type="nucleotide sequence ID" value="NC_011601.1"/>
</dbReference>
<dbReference type="SMR" id="B7USW6"/>
<dbReference type="GeneID" id="93775233"/>
<dbReference type="KEGG" id="ecg:E2348C_2066"/>
<dbReference type="HOGENOM" id="CLU_189289_0_0_6"/>
<dbReference type="Proteomes" id="UP000008205">
    <property type="component" value="Chromosome"/>
</dbReference>
<dbReference type="HAMAP" id="MF_01549">
    <property type="entry name" value="DsrB"/>
    <property type="match status" value="1"/>
</dbReference>
<dbReference type="InterPro" id="IPR019717">
    <property type="entry name" value="Dextransucrase_DSRB"/>
</dbReference>
<dbReference type="NCBIfam" id="NF007981">
    <property type="entry name" value="PRK10708.1"/>
    <property type="match status" value="1"/>
</dbReference>
<dbReference type="Pfam" id="PF10781">
    <property type="entry name" value="DSRB"/>
    <property type="match status" value="1"/>
</dbReference>
<sequence>MKVNDRVTVKTDGGPRRPGVVLAVEEFSEGTMYLVSLEDYPLGIWFFNEAGHQDGIFVEKAE</sequence>
<name>DSRB_ECO27</name>
<keyword id="KW-1185">Reference proteome</keyword>
<accession>B7USW6</accession>
<proteinExistence type="inferred from homology"/>
<feature type="chain" id="PRO_1000185309" description="Protein DsrB">
    <location>
        <begin position="1"/>
        <end position="62"/>
    </location>
</feature>
<organism>
    <name type="scientific">Escherichia coli O127:H6 (strain E2348/69 / EPEC)</name>
    <dbReference type="NCBI Taxonomy" id="574521"/>
    <lineage>
        <taxon>Bacteria</taxon>
        <taxon>Pseudomonadati</taxon>
        <taxon>Pseudomonadota</taxon>
        <taxon>Gammaproteobacteria</taxon>
        <taxon>Enterobacterales</taxon>
        <taxon>Enterobacteriaceae</taxon>
        <taxon>Escherichia</taxon>
    </lineage>
</organism>
<reference key="1">
    <citation type="journal article" date="2009" name="J. Bacteriol.">
        <title>Complete genome sequence and comparative genome analysis of enteropathogenic Escherichia coli O127:H6 strain E2348/69.</title>
        <authorList>
            <person name="Iguchi A."/>
            <person name="Thomson N.R."/>
            <person name="Ogura Y."/>
            <person name="Saunders D."/>
            <person name="Ooka T."/>
            <person name="Henderson I.R."/>
            <person name="Harris D."/>
            <person name="Asadulghani M."/>
            <person name="Kurokawa K."/>
            <person name="Dean P."/>
            <person name="Kenny B."/>
            <person name="Quail M.A."/>
            <person name="Thurston S."/>
            <person name="Dougan G."/>
            <person name="Hayashi T."/>
            <person name="Parkhill J."/>
            <person name="Frankel G."/>
        </authorList>
    </citation>
    <scope>NUCLEOTIDE SEQUENCE [LARGE SCALE GENOMIC DNA]</scope>
    <source>
        <strain>E2348/69 / EPEC</strain>
    </source>
</reference>